<accession>Q9TLT7</accession>
<sequence length="103" mass="11817">MKATIRFIKISPTKVRRITNQIKGLKYADACILLKFMKGRIAKTILKLVNSAFSNSRYSTFADLRIQTVLVEKGPIFNRFQPRAKGRAYPIKKYTSHIKVVLS</sequence>
<name>RK22_CYACA</name>
<reference key="1">
    <citation type="journal article" date="2000" name="J. Mol. Evol.">
        <title>The structure and gene repertoire of an ancient red algal plastid genome.</title>
        <authorList>
            <person name="Gloeckner G."/>
            <person name="Rosenthal A."/>
            <person name="Valentin K.-U."/>
        </authorList>
    </citation>
    <scope>NUCLEOTIDE SEQUENCE [LARGE SCALE GENOMIC DNA]</scope>
    <source>
        <strain>RK-1</strain>
    </source>
</reference>
<evidence type="ECO:0000250" key="1"/>
<evidence type="ECO:0000305" key="2"/>
<protein>
    <recommendedName>
        <fullName evidence="2">Large ribosomal subunit protein uL22c</fullName>
    </recommendedName>
    <alternativeName>
        <fullName>50S ribosomal protein L22, chloroplastic</fullName>
    </alternativeName>
</protein>
<keyword id="KW-0150">Chloroplast</keyword>
<keyword id="KW-0934">Plastid</keyword>
<keyword id="KW-0687">Ribonucleoprotein</keyword>
<keyword id="KW-0689">Ribosomal protein</keyword>
<keyword id="KW-0694">RNA-binding</keyword>
<keyword id="KW-0699">rRNA-binding</keyword>
<dbReference type="EMBL" id="AF022186">
    <property type="protein sequence ID" value="AAF12912.1"/>
    <property type="molecule type" value="Genomic_DNA"/>
</dbReference>
<dbReference type="RefSeq" id="NP_045182.1">
    <property type="nucleotide sequence ID" value="NC_001840.1"/>
</dbReference>
<dbReference type="SMR" id="Q9TLT7"/>
<dbReference type="GeneID" id="800280"/>
<dbReference type="GO" id="GO:0009507">
    <property type="term" value="C:chloroplast"/>
    <property type="evidence" value="ECO:0007669"/>
    <property type="project" value="UniProtKB-SubCell"/>
</dbReference>
<dbReference type="GO" id="GO:0015934">
    <property type="term" value="C:large ribosomal subunit"/>
    <property type="evidence" value="ECO:0007669"/>
    <property type="project" value="InterPro"/>
</dbReference>
<dbReference type="GO" id="GO:0019843">
    <property type="term" value="F:rRNA binding"/>
    <property type="evidence" value="ECO:0007669"/>
    <property type="project" value="UniProtKB-UniRule"/>
</dbReference>
<dbReference type="GO" id="GO:0003735">
    <property type="term" value="F:structural constituent of ribosome"/>
    <property type="evidence" value="ECO:0007669"/>
    <property type="project" value="InterPro"/>
</dbReference>
<dbReference type="GO" id="GO:0006412">
    <property type="term" value="P:translation"/>
    <property type="evidence" value="ECO:0007669"/>
    <property type="project" value="UniProtKB-UniRule"/>
</dbReference>
<dbReference type="CDD" id="cd00336">
    <property type="entry name" value="Ribosomal_L22"/>
    <property type="match status" value="1"/>
</dbReference>
<dbReference type="Gene3D" id="3.90.470.10">
    <property type="entry name" value="Ribosomal protein L22/L17"/>
    <property type="match status" value="1"/>
</dbReference>
<dbReference type="HAMAP" id="MF_01331_B">
    <property type="entry name" value="Ribosomal_uL22_B"/>
    <property type="match status" value="1"/>
</dbReference>
<dbReference type="InterPro" id="IPR001063">
    <property type="entry name" value="Ribosomal_uL22"/>
</dbReference>
<dbReference type="InterPro" id="IPR005727">
    <property type="entry name" value="Ribosomal_uL22_bac/chlpt-type"/>
</dbReference>
<dbReference type="InterPro" id="IPR047867">
    <property type="entry name" value="Ribosomal_uL22_bac/org-type"/>
</dbReference>
<dbReference type="InterPro" id="IPR018260">
    <property type="entry name" value="Ribosomal_uL22_CS"/>
</dbReference>
<dbReference type="InterPro" id="IPR036394">
    <property type="entry name" value="Ribosomal_uL22_sf"/>
</dbReference>
<dbReference type="NCBIfam" id="TIGR01044">
    <property type="entry name" value="rplV_bact"/>
    <property type="match status" value="1"/>
</dbReference>
<dbReference type="PANTHER" id="PTHR13501">
    <property type="entry name" value="CHLOROPLAST 50S RIBOSOMAL PROTEIN L22-RELATED"/>
    <property type="match status" value="1"/>
</dbReference>
<dbReference type="PANTHER" id="PTHR13501:SF8">
    <property type="entry name" value="LARGE RIBOSOMAL SUBUNIT PROTEIN UL22M"/>
    <property type="match status" value="1"/>
</dbReference>
<dbReference type="Pfam" id="PF00237">
    <property type="entry name" value="Ribosomal_L22"/>
    <property type="match status" value="1"/>
</dbReference>
<dbReference type="SUPFAM" id="SSF54843">
    <property type="entry name" value="Ribosomal protein L22"/>
    <property type="match status" value="1"/>
</dbReference>
<dbReference type="PROSITE" id="PS00464">
    <property type="entry name" value="RIBOSOMAL_L22"/>
    <property type="match status" value="1"/>
</dbReference>
<geneLocation type="chloroplast"/>
<organism>
    <name type="scientific">Cyanidium caldarium</name>
    <name type="common">Red alga</name>
    <dbReference type="NCBI Taxonomy" id="2771"/>
    <lineage>
        <taxon>Eukaryota</taxon>
        <taxon>Rhodophyta</taxon>
        <taxon>Bangiophyceae</taxon>
        <taxon>Cyanidiales</taxon>
        <taxon>Cyanidiaceae</taxon>
        <taxon>Cyanidium</taxon>
    </lineage>
</organism>
<comment type="function">
    <text evidence="1">This protein binds specifically to 23S rRNA.</text>
</comment>
<comment type="function">
    <text evidence="1">The globular domain of the protein is located near the polypeptide exit tunnel on the outside of the subunit, while an extended beta-hairpin is found that lines the wall of the exit tunnel in the center of the 70S ribosome.</text>
</comment>
<comment type="subunit">
    <text>Part of the 50S ribosomal subunit.</text>
</comment>
<comment type="subcellular location">
    <subcellularLocation>
        <location>Plastid</location>
        <location>Chloroplast</location>
    </subcellularLocation>
</comment>
<comment type="similarity">
    <text evidence="2">Belongs to the universal ribosomal protein uL22 family.</text>
</comment>
<gene>
    <name type="primary">rpl22</name>
</gene>
<feature type="chain" id="PRO_0000125301" description="Large ribosomal subunit protein uL22c">
    <location>
        <begin position="1"/>
        <end position="103"/>
    </location>
</feature>
<proteinExistence type="inferred from homology"/>